<proteinExistence type="inferred from homology"/>
<feature type="chain" id="PRO_0000374209" description="tRNA-2-methylthio-N(6)-dimethylallyladenosine synthase">
    <location>
        <begin position="1"/>
        <end position="447"/>
    </location>
</feature>
<feature type="domain" description="MTTase N-terminal" evidence="1">
    <location>
        <begin position="14"/>
        <end position="130"/>
    </location>
</feature>
<feature type="domain" description="Radical SAM core" evidence="2">
    <location>
        <begin position="152"/>
        <end position="382"/>
    </location>
</feature>
<feature type="domain" description="TRAM" evidence="1">
    <location>
        <begin position="385"/>
        <end position="447"/>
    </location>
</feature>
<feature type="binding site" evidence="1">
    <location>
        <position position="23"/>
    </location>
    <ligand>
        <name>[4Fe-4S] cluster</name>
        <dbReference type="ChEBI" id="CHEBI:49883"/>
        <label>1</label>
    </ligand>
</feature>
<feature type="binding site" evidence="1">
    <location>
        <position position="59"/>
    </location>
    <ligand>
        <name>[4Fe-4S] cluster</name>
        <dbReference type="ChEBI" id="CHEBI:49883"/>
        <label>1</label>
    </ligand>
</feature>
<feature type="binding site" evidence="1">
    <location>
        <position position="93"/>
    </location>
    <ligand>
        <name>[4Fe-4S] cluster</name>
        <dbReference type="ChEBI" id="CHEBI:49883"/>
        <label>1</label>
    </ligand>
</feature>
<feature type="binding site" evidence="1">
    <location>
        <position position="166"/>
    </location>
    <ligand>
        <name>[4Fe-4S] cluster</name>
        <dbReference type="ChEBI" id="CHEBI:49883"/>
        <label>2</label>
        <note>4Fe-4S-S-AdoMet</note>
    </ligand>
</feature>
<feature type="binding site" evidence="1">
    <location>
        <position position="170"/>
    </location>
    <ligand>
        <name>[4Fe-4S] cluster</name>
        <dbReference type="ChEBI" id="CHEBI:49883"/>
        <label>2</label>
        <note>4Fe-4S-S-AdoMet</note>
    </ligand>
</feature>
<feature type="binding site" evidence="1">
    <location>
        <position position="173"/>
    </location>
    <ligand>
        <name>[4Fe-4S] cluster</name>
        <dbReference type="ChEBI" id="CHEBI:49883"/>
        <label>2</label>
        <note>4Fe-4S-S-AdoMet</note>
    </ligand>
</feature>
<name>MIAB_CHLPB</name>
<evidence type="ECO:0000255" key="1">
    <source>
        <dbReference type="HAMAP-Rule" id="MF_01864"/>
    </source>
</evidence>
<evidence type="ECO:0000255" key="2">
    <source>
        <dbReference type="PROSITE-ProRule" id="PRU01266"/>
    </source>
</evidence>
<keyword id="KW-0004">4Fe-4S</keyword>
<keyword id="KW-0963">Cytoplasm</keyword>
<keyword id="KW-0408">Iron</keyword>
<keyword id="KW-0411">Iron-sulfur</keyword>
<keyword id="KW-0479">Metal-binding</keyword>
<keyword id="KW-0949">S-adenosyl-L-methionine</keyword>
<keyword id="KW-0808">Transferase</keyword>
<keyword id="KW-0819">tRNA processing</keyword>
<gene>
    <name evidence="1" type="primary">miaB</name>
    <name type="ordered locus">Cphamn1_2228</name>
</gene>
<dbReference type="EC" id="2.8.4.3" evidence="1"/>
<dbReference type="EMBL" id="CP001101">
    <property type="protein sequence ID" value="ACE05133.1"/>
    <property type="molecule type" value="Genomic_DNA"/>
</dbReference>
<dbReference type="SMR" id="B3ENP4"/>
<dbReference type="STRING" id="331678.Cphamn1_2228"/>
<dbReference type="KEGG" id="cpb:Cphamn1_2228"/>
<dbReference type="eggNOG" id="COG0621">
    <property type="taxonomic scope" value="Bacteria"/>
</dbReference>
<dbReference type="HOGENOM" id="CLU_018697_2_0_10"/>
<dbReference type="OrthoDB" id="9805215at2"/>
<dbReference type="GO" id="GO:0005829">
    <property type="term" value="C:cytosol"/>
    <property type="evidence" value="ECO:0007669"/>
    <property type="project" value="TreeGrafter"/>
</dbReference>
<dbReference type="GO" id="GO:0051539">
    <property type="term" value="F:4 iron, 4 sulfur cluster binding"/>
    <property type="evidence" value="ECO:0007669"/>
    <property type="project" value="UniProtKB-UniRule"/>
</dbReference>
<dbReference type="GO" id="GO:0046872">
    <property type="term" value="F:metal ion binding"/>
    <property type="evidence" value="ECO:0007669"/>
    <property type="project" value="UniProtKB-KW"/>
</dbReference>
<dbReference type="GO" id="GO:0035597">
    <property type="term" value="F:N6-isopentenyladenosine methylthiotransferase activity"/>
    <property type="evidence" value="ECO:0007669"/>
    <property type="project" value="TreeGrafter"/>
</dbReference>
<dbReference type="CDD" id="cd01335">
    <property type="entry name" value="Radical_SAM"/>
    <property type="match status" value="1"/>
</dbReference>
<dbReference type="FunFam" id="3.40.50.12160:FF:000003">
    <property type="entry name" value="CDK5 regulatory subunit-associated protein 1"/>
    <property type="match status" value="1"/>
</dbReference>
<dbReference type="FunFam" id="3.80.30.20:FF:000001">
    <property type="entry name" value="tRNA-2-methylthio-N(6)-dimethylallyladenosine synthase 2"/>
    <property type="match status" value="1"/>
</dbReference>
<dbReference type="Gene3D" id="3.40.50.12160">
    <property type="entry name" value="Methylthiotransferase, N-terminal domain"/>
    <property type="match status" value="1"/>
</dbReference>
<dbReference type="Gene3D" id="3.80.30.20">
    <property type="entry name" value="tm_1862 like domain"/>
    <property type="match status" value="1"/>
</dbReference>
<dbReference type="HAMAP" id="MF_01864">
    <property type="entry name" value="tRNA_metthiotr_MiaB"/>
    <property type="match status" value="1"/>
</dbReference>
<dbReference type="InterPro" id="IPR006638">
    <property type="entry name" value="Elp3/MiaA/NifB-like_rSAM"/>
</dbReference>
<dbReference type="InterPro" id="IPR005839">
    <property type="entry name" value="Methylthiotransferase"/>
</dbReference>
<dbReference type="InterPro" id="IPR020612">
    <property type="entry name" value="Methylthiotransferase_CS"/>
</dbReference>
<dbReference type="InterPro" id="IPR013848">
    <property type="entry name" value="Methylthiotransferase_N"/>
</dbReference>
<dbReference type="InterPro" id="IPR038135">
    <property type="entry name" value="Methylthiotransferase_N_sf"/>
</dbReference>
<dbReference type="InterPro" id="IPR006463">
    <property type="entry name" value="MiaB_methiolase"/>
</dbReference>
<dbReference type="InterPro" id="IPR007197">
    <property type="entry name" value="rSAM"/>
</dbReference>
<dbReference type="InterPro" id="IPR023404">
    <property type="entry name" value="rSAM_horseshoe"/>
</dbReference>
<dbReference type="InterPro" id="IPR002792">
    <property type="entry name" value="TRAM_dom"/>
</dbReference>
<dbReference type="NCBIfam" id="TIGR01574">
    <property type="entry name" value="miaB-methiolase"/>
    <property type="match status" value="1"/>
</dbReference>
<dbReference type="NCBIfam" id="TIGR00089">
    <property type="entry name" value="MiaB/RimO family radical SAM methylthiotransferase"/>
    <property type="match status" value="1"/>
</dbReference>
<dbReference type="PANTHER" id="PTHR43020">
    <property type="entry name" value="CDK5 REGULATORY SUBUNIT-ASSOCIATED PROTEIN 1"/>
    <property type="match status" value="1"/>
</dbReference>
<dbReference type="PANTHER" id="PTHR43020:SF2">
    <property type="entry name" value="MITOCHONDRIAL TRNA METHYLTHIOTRANSFERASE CDK5RAP1"/>
    <property type="match status" value="1"/>
</dbReference>
<dbReference type="Pfam" id="PF04055">
    <property type="entry name" value="Radical_SAM"/>
    <property type="match status" value="1"/>
</dbReference>
<dbReference type="Pfam" id="PF01938">
    <property type="entry name" value="TRAM"/>
    <property type="match status" value="1"/>
</dbReference>
<dbReference type="Pfam" id="PF00919">
    <property type="entry name" value="UPF0004"/>
    <property type="match status" value="1"/>
</dbReference>
<dbReference type="SFLD" id="SFLDF00273">
    <property type="entry name" value="(dimethylallyl)adenosine_tRNA"/>
    <property type="match status" value="1"/>
</dbReference>
<dbReference type="SFLD" id="SFLDG01082">
    <property type="entry name" value="B12-binding_domain_containing"/>
    <property type="match status" value="1"/>
</dbReference>
<dbReference type="SFLD" id="SFLDF00413">
    <property type="entry name" value="CDK5RAP1"/>
    <property type="match status" value="1"/>
</dbReference>
<dbReference type="SFLD" id="SFLDG01061">
    <property type="entry name" value="methylthiotransferase"/>
    <property type="match status" value="1"/>
</dbReference>
<dbReference type="SMART" id="SM00729">
    <property type="entry name" value="Elp3"/>
    <property type="match status" value="1"/>
</dbReference>
<dbReference type="SUPFAM" id="SSF102114">
    <property type="entry name" value="Radical SAM enzymes"/>
    <property type="match status" value="1"/>
</dbReference>
<dbReference type="PROSITE" id="PS51449">
    <property type="entry name" value="MTTASE_N"/>
    <property type="match status" value="1"/>
</dbReference>
<dbReference type="PROSITE" id="PS01278">
    <property type="entry name" value="MTTASE_RADICAL"/>
    <property type="match status" value="1"/>
</dbReference>
<dbReference type="PROSITE" id="PS51918">
    <property type="entry name" value="RADICAL_SAM"/>
    <property type="match status" value="1"/>
</dbReference>
<dbReference type="PROSITE" id="PS50926">
    <property type="entry name" value="TRAM"/>
    <property type="match status" value="1"/>
</dbReference>
<reference key="1">
    <citation type="submission" date="2008-06" db="EMBL/GenBank/DDBJ databases">
        <title>Complete sequence of Chlorobium phaeobacteroides BS1.</title>
        <authorList>
            <consortium name="US DOE Joint Genome Institute"/>
            <person name="Lucas S."/>
            <person name="Copeland A."/>
            <person name="Lapidus A."/>
            <person name="Glavina del Rio T."/>
            <person name="Dalin E."/>
            <person name="Tice H."/>
            <person name="Bruce D."/>
            <person name="Goodwin L."/>
            <person name="Pitluck S."/>
            <person name="Schmutz J."/>
            <person name="Larimer F."/>
            <person name="Land M."/>
            <person name="Hauser L."/>
            <person name="Kyrpides N."/>
            <person name="Ovchinnikova G."/>
            <person name="Li T."/>
            <person name="Liu Z."/>
            <person name="Zhao F."/>
            <person name="Overmann J."/>
            <person name="Bryant D.A."/>
            <person name="Richardson P."/>
        </authorList>
    </citation>
    <scope>NUCLEOTIDE SEQUENCE [LARGE SCALE GENOMIC DNA]</scope>
    <source>
        <strain>BS1</strain>
    </source>
</reference>
<sequence length="447" mass="49386">MNSIIKGNVLQMTKKVYIRTFGCQMNQADTEIITALLQDEGYVMTGSEERADLVILNTCAVRENAVEKILHTLDHMKGKRRSRPGLLVGVIGCVPQYYREKMFGMADGIDFLAGPDTYRQLPAMIANAGQGIRGADFGFSSDETYCGIEPARSGTISAFIPVMRGCNNRCAFCVVPFTRGKERSRPFRSVLEDVGRLAASGYKEITLLGQNVNSYSDDEAACDFTELLDRVAVAAEGVRIRFTTSHPKDISESLVRVIAARNNICNAIHLPVQSGSTRMLKLMNRGHTREEYFEKIAMIRSAIPGVTVSTDLIAGFCGETLEDHQATLSMMEDVRFDFAYMFYYSVRPGTYAAKHLPDDVPEEEKKRRLEEIIALQGSISGERNAAEVGAVVEVLAESESKRSSEMLMGRTDTNRVVVFDRHGFEAGDLVKVRIRSSTPATLIGTPA</sequence>
<accession>B3ENP4</accession>
<protein>
    <recommendedName>
        <fullName evidence="1">tRNA-2-methylthio-N(6)-dimethylallyladenosine synthase</fullName>
        <ecNumber evidence="1">2.8.4.3</ecNumber>
    </recommendedName>
    <alternativeName>
        <fullName evidence="1">(Dimethylallyl)adenosine tRNA methylthiotransferase MiaB</fullName>
    </alternativeName>
    <alternativeName>
        <fullName evidence="1">tRNA-i(6)A37 methylthiotransferase</fullName>
    </alternativeName>
</protein>
<organism>
    <name type="scientific">Chlorobium phaeobacteroides (strain BS1)</name>
    <dbReference type="NCBI Taxonomy" id="331678"/>
    <lineage>
        <taxon>Bacteria</taxon>
        <taxon>Pseudomonadati</taxon>
        <taxon>Chlorobiota</taxon>
        <taxon>Chlorobiia</taxon>
        <taxon>Chlorobiales</taxon>
        <taxon>Chlorobiaceae</taxon>
        <taxon>Chlorobium/Pelodictyon group</taxon>
        <taxon>Chlorobium</taxon>
    </lineage>
</organism>
<comment type="function">
    <text evidence="1">Catalyzes the methylthiolation of N6-(dimethylallyl)adenosine (i(6)A), leading to the formation of 2-methylthio-N6-(dimethylallyl)adenosine (ms(2)i(6)A) at position 37 in tRNAs that read codons beginning with uridine.</text>
</comment>
<comment type="catalytic activity">
    <reaction evidence="1">
        <text>N(6)-dimethylallyladenosine(37) in tRNA + (sulfur carrier)-SH + AH2 + 2 S-adenosyl-L-methionine = 2-methylsulfanyl-N(6)-dimethylallyladenosine(37) in tRNA + (sulfur carrier)-H + 5'-deoxyadenosine + L-methionine + A + S-adenosyl-L-homocysteine + 2 H(+)</text>
        <dbReference type="Rhea" id="RHEA:37067"/>
        <dbReference type="Rhea" id="RHEA-COMP:10375"/>
        <dbReference type="Rhea" id="RHEA-COMP:10376"/>
        <dbReference type="Rhea" id="RHEA-COMP:14737"/>
        <dbReference type="Rhea" id="RHEA-COMP:14739"/>
        <dbReference type="ChEBI" id="CHEBI:13193"/>
        <dbReference type="ChEBI" id="CHEBI:15378"/>
        <dbReference type="ChEBI" id="CHEBI:17319"/>
        <dbReference type="ChEBI" id="CHEBI:17499"/>
        <dbReference type="ChEBI" id="CHEBI:29917"/>
        <dbReference type="ChEBI" id="CHEBI:57844"/>
        <dbReference type="ChEBI" id="CHEBI:57856"/>
        <dbReference type="ChEBI" id="CHEBI:59789"/>
        <dbReference type="ChEBI" id="CHEBI:64428"/>
        <dbReference type="ChEBI" id="CHEBI:74415"/>
        <dbReference type="ChEBI" id="CHEBI:74417"/>
        <dbReference type="EC" id="2.8.4.3"/>
    </reaction>
</comment>
<comment type="cofactor">
    <cofactor evidence="1">
        <name>[4Fe-4S] cluster</name>
        <dbReference type="ChEBI" id="CHEBI:49883"/>
    </cofactor>
    <text evidence="1">Binds 2 [4Fe-4S] clusters. One cluster is coordinated with 3 cysteines and an exchangeable S-adenosyl-L-methionine.</text>
</comment>
<comment type="subunit">
    <text evidence="1">Monomer.</text>
</comment>
<comment type="subcellular location">
    <subcellularLocation>
        <location evidence="1">Cytoplasm</location>
    </subcellularLocation>
</comment>
<comment type="similarity">
    <text evidence="1">Belongs to the methylthiotransferase family. MiaB subfamily.</text>
</comment>